<reference key="1">
    <citation type="journal article" date="1992" name="J. Protein Chem.">
        <title>Amino acid sequence of the coelomic C globin from the sea cucumber Caudina (Molpadia) arenicola.</title>
        <authorList>
            <person name="McDonald G.D."/>
            <person name="Davidson L."/>
            <person name="Kitto G.B."/>
        </authorList>
    </citation>
    <scope>PROTEIN SEQUENCE OF 2-159</scope>
    <scope>ACETYLATION AT GLY-2</scope>
    <source>
        <tissue>Coelomic fluid</tissue>
    </source>
</reference>
<reference key="2">
    <citation type="thesis" date="1994" institute="University of Texas / Austin" country="United States">
        <authorList>
            <person name="Thomas P.W."/>
        </authorList>
    </citation>
    <scope>PROTEIN SEQUENCE OF 2-159</scope>
</reference>
<reference key="3">
    <citation type="journal article" date="1995" name="Acta Crystallogr. D">
        <title>Three-dimensional structure of a hemichrome hemoglobin from Caudina arenicola.</title>
        <authorList>
            <person name="Mitchell D.T."/>
            <person name="Ernst S.R."/>
            <person name="Wu W.X."/>
            <person name="Hackert M.L."/>
        </authorList>
    </citation>
    <scope>X-RAY CRYSTALLOGRAPHY (2.5 ANGSTROMS)</scope>
</reference>
<evidence type="ECO:0000255" key="1">
    <source>
        <dbReference type="PROSITE-ProRule" id="PRU00238"/>
    </source>
</evidence>
<evidence type="ECO:0000269" key="2">
    <source>
    </source>
</evidence>
<evidence type="ECO:0000269" key="3">
    <source ref="2"/>
</evidence>
<evidence type="ECO:0000305" key="4"/>
<evidence type="ECO:0007829" key="5">
    <source>
        <dbReference type="PDB" id="1HLB"/>
    </source>
</evidence>
<name>GLBC_MOLAR</name>
<feature type="initiator methionine" description="Removed" evidence="2 3">
    <location>
        <position position="1"/>
    </location>
</feature>
<feature type="chain" id="PRO_0000052496" description="Globin C, coelomic">
    <location>
        <begin position="2"/>
        <end position="159"/>
    </location>
</feature>
<feature type="domain" description="Globin" evidence="1">
    <location>
        <begin position="12"/>
        <end position="158"/>
    </location>
</feature>
<feature type="binding site" description="distal binding residue">
    <location>
        <position position="74"/>
    </location>
    <ligand>
        <name>heme b</name>
        <dbReference type="ChEBI" id="CHEBI:60344"/>
    </ligand>
    <ligandPart>
        <name>Fe</name>
        <dbReference type="ChEBI" id="CHEBI:18248"/>
    </ligandPart>
</feature>
<feature type="binding site" description="proximal binding residue">
    <location>
        <position position="105"/>
    </location>
    <ligand>
        <name>heme b</name>
        <dbReference type="ChEBI" id="CHEBI:60344"/>
    </ligand>
    <ligandPart>
        <name>Fe</name>
        <dbReference type="ChEBI" id="CHEBI:18248"/>
    </ligandPart>
</feature>
<feature type="modified residue" description="N-acetylglycine" evidence="2">
    <location>
        <position position="2"/>
    </location>
</feature>
<feature type="sequence conflict" description="In Ref. 1; AA sequence." evidence="4" ref="1">
    <location>
        <position position="3"/>
    </location>
</feature>
<feature type="sequence conflict" description="In Ref. 1; AA sequence." evidence="4" ref="1">
    <original>D</original>
    <variation>A</variation>
    <location>
        <position position="133"/>
    </location>
</feature>
<feature type="helix" evidence="5">
    <location>
        <begin position="15"/>
        <end position="31"/>
    </location>
</feature>
<feature type="helix" evidence="5">
    <location>
        <begin position="35"/>
        <end position="46"/>
    </location>
</feature>
<feature type="helix" evidence="5">
    <location>
        <begin position="49"/>
        <end position="52"/>
    </location>
</feature>
<feature type="helix" evidence="5">
    <location>
        <begin position="55"/>
        <end position="57"/>
    </location>
</feature>
<feature type="helix" evidence="5">
    <location>
        <begin position="62"/>
        <end position="65"/>
    </location>
</feature>
<feature type="helix" evidence="5">
    <location>
        <begin position="69"/>
        <end position="86"/>
    </location>
</feature>
<feature type="helix" evidence="5">
    <location>
        <begin position="94"/>
        <end position="97"/>
    </location>
</feature>
<feature type="helix" evidence="5">
    <location>
        <begin position="99"/>
        <end position="107"/>
    </location>
</feature>
<feature type="helix" evidence="5">
    <location>
        <begin position="112"/>
        <end position="130"/>
    </location>
</feature>
<feature type="helix" evidence="5">
    <location>
        <begin position="137"/>
        <end position="151"/>
    </location>
</feature>
<proteinExistence type="evidence at protein level"/>
<sequence length="159" mass="17780">MGGTLAIQAQGDLTLAQKKIVRKTWHQLMRNKTSFVTDVFIRIFAYDPSAQNKFPQMAGMSASQLRSSRQMQAHAIRVSSIMSEYVEELDSDILPELLATLARTHDLNKVGADHYNLFAKVLMEALQAELGSDFNEKTRDAWAKAFSVVQAVLLVKHGN</sequence>
<keyword id="KW-0002">3D-structure</keyword>
<keyword id="KW-0007">Acetylation</keyword>
<keyword id="KW-0903">Direct protein sequencing</keyword>
<keyword id="KW-0349">Heme</keyword>
<keyword id="KW-0408">Iron</keyword>
<keyword id="KW-0479">Metal-binding</keyword>
<keyword id="KW-0561">Oxygen transport</keyword>
<keyword id="KW-0813">Transport</keyword>
<organism>
    <name type="scientific">Molpadia arenicola</name>
    <name type="common">Sea cucumber</name>
    <name type="synonym">Caudina arenicola</name>
    <dbReference type="NCBI Taxonomy" id="7698"/>
    <lineage>
        <taxon>Eukaryota</taxon>
        <taxon>Metazoa</taxon>
        <taxon>Echinodermata</taxon>
        <taxon>Eleutherozoa</taxon>
        <taxon>Echinozoa</taxon>
        <taxon>Holothuroidea</taxon>
        <taxon>Apodacea</taxon>
        <taxon>Molpadida</taxon>
        <taxon>Molpadiidae</taxon>
        <taxon>Molpadia</taxon>
    </lineage>
</organism>
<dbReference type="PIR" id="A53881">
    <property type="entry name" value="A53881"/>
</dbReference>
<dbReference type="PDB" id="1HLB">
    <property type="method" value="X-ray"/>
    <property type="resolution" value="2.50 A"/>
    <property type="chains" value="A=2-158"/>
</dbReference>
<dbReference type="PDBsum" id="1HLB"/>
<dbReference type="SMR" id="P80018"/>
<dbReference type="iPTMnet" id="P80018"/>
<dbReference type="EvolutionaryTrace" id="P80018"/>
<dbReference type="GO" id="GO:0005576">
    <property type="term" value="C:extracellular region"/>
    <property type="evidence" value="ECO:0007669"/>
    <property type="project" value="InterPro"/>
</dbReference>
<dbReference type="GO" id="GO:0005833">
    <property type="term" value="C:hemoglobin complex"/>
    <property type="evidence" value="ECO:0007669"/>
    <property type="project" value="InterPro"/>
</dbReference>
<dbReference type="GO" id="GO:0020037">
    <property type="term" value="F:heme binding"/>
    <property type="evidence" value="ECO:0007669"/>
    <property type="project" value="InterPro"/>
</dbReference>
<dbReference type="GO" id="GO:0046872">
    <property type="term" value="F:metal ion binding"/>
    <property type="evidence" value="ECO:0007669"/>
    <property type="project" value="UniProtKB-KW"/>
</dbReference>
<dbReference type="GO" id="GO:0019825">
    <property type="term" value="F:oxygen binding"/>
    <property type="evidence" value="ECO:0007669"/>
    <property type="project" value="InterPro"/>
</dbReference>
<dbReference type="GO" id="GO:0005344">
    <property type="term" value="F:oxygen carrier activity"/>
    <property type="evidence" value="ECO:0007669"/>
    <property type="project" value="UniProtKB-KW"/>
</dbReference>
<dbReference type="CDD" id="cd01040">
    <property type="entry name" value="Mb-like"/>
    <property type="match status" value="1"/>
</dbReference>
<dbReference type="Gene3D" id="1.10.490.10">
    <property type="entry name" value="Globins"/>
    <property type="match status" value="1"/>
</dbReference>
<dbReference type="InterPro" id="IPR002336">
    <property type="entry name" value="Erythrocruorin"/>
</dbReference>
<dbReference type="InterPro" id="IPR000971">
    <property type="entry name" value="Globin"/>
</dbReference>
<dbReference type="InterPro" id="IPR009050">
    <property type="entry name" value="Globin-like_sf"/>
</dbReference>
<dbReference type="InterPro" id="IPR012292">
    <property type="entry name" value="Globin/Proto"/>
</dbReference>
<dbReference type="InterPro" id="IPR044399">
    <property type="entry name" value="Mb-like_M"/>
</dbReference>
<dbReference type="PANTHER" id="PTHR47217">
    <property type="entry name" value="GLOBIN-LIKE PROTEIN"/>
    <property type="match status" value="1"/>
</dbReference>
<dbReference type="PANTHER" id="PTHR47217:SF1">
    <property type="entry name" value="GLOBIN-LIKE PROTEIN"/>
    <property type="match status" value="1"/>
</dbReference>
<dbReference type="Pfam" id="PF00042">
    <property type="entry name" value="Globin"/>
    <property type="match status" value="1"/>
</dbReference>
<dbReference type="PRINTS" id="PR00611">
    <property type="entry name" value="ERYTHCRUORIN"/>
</dbReference>
<dbReference type="SUPFAM" id="SSF46458">
    <property type="entry name" value="Globin-like"/>
    <property type="match status" value="1"/>
</dbReference>
<dbReference type="PROSITE" id="PS01033">
    <property type="entry name" value="GLOBIN"/>
    <property type="match status" value="1"/>
</dbReference>
<accession>P80018</accession>
<protein>
    <recommendedName>
        <fullName>Globin C, coelomic</fullName>
    </recommendedName>
</protein>
<comment type="subunit">
    <text>Monomer.</text>
</comment>
<comment type="miscellaneous">
    <text>Caudina arenicola coelomocytes contain four hemoglobin chains labeled A, B, C, D.</text>
</comment>
<comment type="similarity">
    <text evidence="1">Belongs to the globin family.</text>
</comment>